<organism>
    <name type="scientific">Streptococcus equi subsp. zooepidemicus (strain MGCS10565)</name>
    <dbReference type="NCBI Taxonomy" id="552526"/>
    <lineage>
        <taxon>Bacteria</taxon>
        <taxon>Bacillati</taxon>
        <taxon>Bacillota</taxon>
        <taxon>Bacilli</taxon>
        <taxon>Lactobacillales</taxon>
        <taxon>Streptococcaceae</taxon>
        <taxon>Streptococcus</taxon>
    </lineage>
</organism>
<keyword id="KW-0240">DNA-directed RNA polymerase</keyword>
<keyword id="KW-0548">Nucleotidyltransferase</keyword>
<keyword id="KW-0804">Transcription</keyword>
<keyword id="KW-0808">Transferase</keyword>
<name>RPOZ_STREM</name>
<accession>B4U4H7</accession>
<reference key="1">
    <citation type="journal article" date="2008" name="PLoS ONE">
        <title>Genome sequence of a lancefield group C Streptococcus zooepidemicus strain causing epidemic nephritis: new information about an old disease.</title>
        <authorList>
            <person name="Beres S.B."/>
            <person name="Sesso R."/>
            <person name="Pinto S.W.L."/>
            <person name="Hoe N.P."/>
            <person name="Porcella S.F."/>
            <person name="Deleo F.R."/>
            <person name="Musser J.M."/>
        </authorList>
    </citation>
    <scope>NUCLEOTIDE SEQUENCE [LARGE SCALE GENOMIC DNA]</scope>
    <source>
        <strain>MGCS10565</strain>
    </source>
</reference>
<dbReference type="EC" id="2.7.7.6" evidence="1"/>
<dbReference type="EMBL" id="CP001129">
    <property type="protein sequence ID" value="ACG62894.1"/>
    <property type="molecule type" value="Genomic_DNA"/>
</dbReference>
<dbReference type="RefSeq" id="WP_012516150.1">
    <property type="nucleotide sequence ID" value="NC_011134.1"/>
</dbReference>
<dbReference type="SMR" id="B4U4H7"/>
<dbReference type="GeneID" id="83705428"/>
<dbReference type="KEGG" id="sez:Sez_1561"/>
<dbReference type="HOGENOM" id="CLU_125406_0_0_9"/>
<dbReference type="Proteomes" id="UP000001873">
    <property type="component" value="Chromosome"/>
</dbReference>
<dbReference type="GO" id="GO:0000428">
    <property type="term" value="C:DNA-directed RNA polymerase complex"/>
    <property type="evidence" value="ECO:0007669"/>
    <property type="project" value="UniProtKB-KW"/>
</dbReference>
<dbReference type="GO" id="GO:0003677">
    <property type="term" value="F:DNA binding"/>
    <property type="evidence" value="ECO:0007669"/>
    <property type="project" value="UniProtKB-UniRule"/>
</dbReference>
<dbReference type="GO" id="GO:0003899">
    <property type="term" value="F:DNA-directed RNA polymerase activity"/>
    <property type="evidence" value="ECO:0007669"/>
    <property type="project" value="UniProtKB-UniRule"/>
</dbReference>
<dbReference type="GO" id="GO:0006351">
    <property type="term" value="P:DNA-templated transcription"/>
    <property type="evidence" value="ECO:0007669"/>
    <property type="project" value="UniProtKB-UniRule"/>
</dbReference>
<dbReference type="Gene3D" id="3.90.940.10">
    <property type="match status" value="1"/>
</dbReference>
<dbReference type="HAMAP" id="MF_00366">
    <property type="entry name" value="RNApol_bact_RpoZ"/>
    <property type="match status" value="1"/>
</dbReference>
<dbReference type="InterPro" id="IPR003716">
    <property type="entry name" value="DNA-dir_RNA_pol_omega"/>
</dbReference>
<dbReference type="InterPro" id="IPR006110">
    <property type="entry name" value="Pol_omega/Rpo6/RPB6"/>
</dbReference>
<dbReference type="InterPro" id="IPR036161">
    <property type="entry name" value="RPB6/omega-like_sf"/>
</dbReference>
<dbReference type="NCBIfam" id="TIGR00690">
    <property type="entry name" value="rpoZ"/>
    <property type="match status" value="1"/>
</dbReference>
<dbReference type="PANTHER" id="PTHR34476">
    <property type="entry name" value="DNA-DIRECTED RNA POLYMERASE SUBUNIT OMEGA"/>
    <property type="match status" value="1"/>
</dbReference>
<dbReference type="PANTHER" id="PTHR34476:SF1">
    <property type="entry name" value="DNA-DIRECTED RNA POLYMERASE SUBUNIT OMEGA"/>
    <property type="match status" value="1"/>
</dbReference>
<dbReference type="Pfam" id="PF01192">
    <property type="entry name" value="RNA_pol_Rpb6"/>
    <property type="match status" value="1"/>
</dbReference>
<dbReference type="SMART" id="SM01409">
    <property type="entry name" value="RNA_pol_Rpb6"/>
    <property type="match status" value="1"/>
</dbReference>
<dbReference type="SUPFAM" id="SSF63562">
    <property type="entry name" value="RPB6/omega subunit-like"/>
    <property type="match status" value="1"/>
</dbReference>
<comment type="function">
    <text evidence="1">Promotes RNA polymerase assembly. Latches the N- and C-terminal regions of the beta' subunit thereby facilitating its interaction with the beta and alpha subunits.</text>
</comment>
<comment type="catalytic activity">
    <reaction evidence="1">
        <text>RNA(n) + a ribonucleoside 5'-triphosphate = RNA(n+1) + diphosphate</text>
        <dbReference type="Rhea" id="RHEA:21248"/>
        <dbReference type="Rhea" id="RHEA-COMP:14527"/>
        <dbReference type="Rhea" id="RHEA-COMP:17342"/>
        <dbReference type="ChEBI" id="CHEBI:33019"/>
        <dbReference type="ChEBI" id="CHEBI:61557"/>
        <dbReference type="ChEBI" id="CHEBI:140395"/>
        <dbReference type="EC" id="2.7.7.6"/>
    </reaction>
</comment>
<comment type="subunit">
    <text evidence="1">The RNAP catalytic core consists of 2 alpha, 1 beta, 1 beta' and 1 omega subunit. When a sigma factor is associated with the core the holoenzyme is formed, which can initiate transcription.</text>
</comment>
<comment type="similarity">
    <text evidence="1">Belongs to the RNA polymerase subunit omega family.</text>
</comment>
<protein>
    <recommendedName>
        <fullName evidence="1">DNA-directed RNA polymerase subunit omega</fullName>
        <shortName evidence="1">RNAP omega subunit</shortName>
        <ecNumber evidence="1">2.7.7.6</ecNumber>
    </recommendedName>
    <alternativeName>
        <fullName evidence="1">RNA polymerase omega subunit</fullName>
    </alternativeName>
    <alternativeName>
        <fullName evidence="1">Transcriptase subunit omega</fullName>
    </alternativeName>
</protein>
<feature type="chain" id="PRO_1000121275" description="DNA-directed RNA polymerase subunit omega">
    <location>
        <begin position="1"/>
        <end position="105"/>
    </location>
</feature>
<gene>
    <name evidence="1" type="primary">rpoZ</name>
    <name type="ordered locus">Sez_1561</name>
</gene>
<proteinExistence type="inferred from homology"/>
<evidence type="ECO:0000255" key="1">
    <source>
        <dbReference type="HAMAP-Rule" id="MF_00366"/>
    </source>
</evidence>
<sequence>MMLKPSIDTLLDKVPSKYSLVILQAKRAHELEAGATPTQAFKSVKSTLQALEEIESGNVVIHPDPAAKRAAVRARIEAERLAREEEERKIKEQIAKEKEEEGEKI</sequence>